<reference key="1">
    <citation type="journal article" date="1989" name="EMBO J.">
        <title>The gene coding for the major birch pollen allergen Betv1, is highly homologous to a pea disease resistance response gene.</title>
        <authorList>
            <person name="Breiteneder H."/>
            <person name="Pettenburger K."/>
            <person name="Bito A."/>
            <person name="Valenta R."/>
            <person name="Kraft D."/>
            <person name="Rumpold H."/>
            <person name="Scheiner O."/>
            <person name="Breitenbach M."/>
        </authorList>
    </citation>
    <scope>NUCLEOTIDE SEQUENCE [MRNA]</scope>
    <scope>PROTEIN SEQUENCE OF 2-35</scope>
    <source>
        <tissue>Pollen</tissue>
    </source>
</reference>
<reference key="2">
    <citation type="submission" date="1996-09" db="EMBL/GenBank/DDBJ databases">
        <authorList>
            <person name="Larsen J.N."/>
        </authorList>
    </citation>
    <scope>NUCLEOTIDE SEQUENCE [MRNA]</scope>
    <source>
        <tissue>Pollen</tissue>
    </source>
</reference>
<reference key="3">
    <citation type="journal article" date="1995" name="J. Biol. Chem.">
        <title>Isoforms of Bet v 1, the major birch pollen allergen, analyzed by liquid chromatography, mass spectrometry, and cDNA cloning.</title>
        <authorList>
            <person name="Swoboda I."/>
            <person name="Jilek A."/>
            <person name="Ferreira F."/>
            <person name="Engel E."/>
            <person name="Hoffman-Sommergruber K."/>
            <person name="Scheiner O."/>
            <person name="Kraft D."/>
            <person name="Breiteneder H."/>
            <person name="Pittenauer E."/>
            <person name="Schmid E."/>
            <person name="Vicente O."/>
            <person name="Heberle-Bors E."/>
            <person name="Ahorn H."/>
            <person name="Breitenbach M."/>
        </authorList>
    </citation>
    <scope>PROTEIN SEQUENCE OF 2-160</scope>
    <source>
        <tissue>Pollen</tissue>
    </source>
</reference>
<reference key="4">
    <citation type="journal article" date="1990" name="Int. Arch. Allergy Appl. Immunol.">
        <title>Purification and N-terminal amino acid sequence of two birch pollen isoallergens (Bet v I and Bet v II).</title>
        <authorList>
            <person name="Elsayed S."/>
            <person name="Vik H."/>
        </authorList>
    </citation>
    <scope>PARTIAL PROTEIN SEQUENCE</scope>
</reference>
<reference key="5">
    <citation type="journal article" date="1996" name="J. Biol. Chem.">
        <title>Secondary structure and tertiary fold of the birch pollen allergen Bet v 1 in solution.</title>
        <authorList>
            <person name="Faber C."/>
            <person name="Lindemann A."/>
            <person name="Sticht H."/>
            <person name="Ejchart A."/>
            <person name="Kungl A."/>
            <person name="Susani M."/>
            <person name="Frank R.W."/>
            <person name="Kraft D."/>
            <person name="Breitenbach M."/>
            <person name="Roesch P."/>
        </authorList>
    </citation>
    <scope>STRUCTURE BY NMR</scope>
</reference>
<reference key="6">
    <citation type="journal article" date="1996" name="Nat. Struct. Biol.">
        <title>X-ray and NMR structure of Bet v 1, the origin of birch pollen allergy.</title>
        <authorList>
            <person name="Gajhede M."/>
            <person name="Osmark P."/>
            <person name="Poulsen F.M."/>
            <person name="Ipsen H."/>
            <person name="Larsen J.N."/>
            <person name="van Neerven R.J.J."/>
            <person name="Schou C."/>
            <person name="Loewenstein H."/>
            <person name="Spangfort M.D."/>
        </authorList>
    </citation>
    <scope>X-RAY CRYSTALLOGRAPHY (2.0 ANGSTROMS)</scope>
    <scope>STRUCTURE BY NMR</scope>
</reference>
<reference key="7">
    <citation type="journal article" date="2000" name="J. Immunol.">
        <title>Dominant epitopes and allergic cross-reactivity: complex formation between a Fab fragment of a monoclonal murine IgG antibody and the major allergen from birch pollen Bet v 1.</title>
        <authorList>
            <person name="Mirza O."/>
            <person name="Henriksen A."/>
            <person name="Ipsen H."/>
            <person name="Larsen J.N."/>
            <person name="Wissenbach M."/>
            <person name="Spangfort M.D."/>
            <person name="Gajhede M."/>
        </authorList>
    </citation>
    <scope>X-RAY CRYSTALLOGRAPHY (2.9 ANGSTROMS) IN COMPLEX WITH THE FAB FRAGMENT FROM A MURINE MONOCLONAL IGG1 AB</scope>
</reference>
<reference key="8">
    <citation type="journal article" date="2003" name="J. Immunol.">
        <title>Dominating IgE-binding epitope of Bet v 1, the major allergen of birch pollen, characterized by X-ray crystallography and site-directed mutagenesis.</title>
        <authorList>
            <person name="Spangfort M.D."/>
            <person name="Mirza O."/>
            <person name="Ipsen H."/>
            <person name="Van Neerven R.J."/>
            <person name="Gajhede M."/>
            <person name="Larsen J.N."/>
        </authorList>
    </citation>
    <scope>X-RAY CRYSTALLOGRAPHY (3.1 ANGSTROMS) IN COMPLEX WITH THE FAB FRAGMENT FROM THE HUMAN MONOCLONAL BV16 IMMUNOGLOBULIN</scope>
    <scope>MUTAGENESIS OF ASN-29; LYS-33; GLU-46; ASN-48; GLU-61 AND PRO-109</scope>
</reference>
<feature type="initiator methionine" description="Removed" evidence="4 5">
    <location>
        <position position="1"/>
    </location>
</feature>
<feature type="chain" id="PRO_0000154174" description="Major pollen allergen Bet v 1-A">
    <location>
        <begin position="2"/>
        <end position="160"/>
    </location>
</feature>
<feature type="binding site" evidence="2">
    <location>
        <position position="55"/>
    </location>
    <ligand>
        <name>brassinolide</name>
        <dbReference type="ChEBI" id="CHEBI:28277"/>
    </ligand>
</feature>
<feature type="binding site" evidence="2">
    <location>
        <position position="82"/>
    </location>
    <ligand>
        <name>brassinolide</name>
        <dbReference type="ChEBI" id="CHEBI:28277"/>
    </ligand>
</feature>
<feature type="binding site" evidence="2">
    <location>
        <position position="84"/>
    </location>
    <ligand>
        <name>brassinolide</name>
        <dbReference type="ChEBI" id="CHEBI:28277"/>
    </ligand>
</feature>
<feature type="binding site" evidence="2">
    <location>
        <position position="101"/>
    </location>
    <ligand>
        <name>brassinolide</name>
        <dbReference type="ChEBI" id="CHEBI:28277"/>
    </ligand>
</feature>
<feature type="sequence variant">
    <original>F</original>
    <variation>L</variation>
    <location>
        <position position="63"/>
    </location>
</feature>
<feature type="mutagenesis site" description="Slightly reduced interaction with BV16; when associated with N-33." evidence="3">
    <original>N</original>
    <variation>T</variation>
    <location>
        <position position="29"/>
    </location>
</feature>
<feature type="mutagenesis site" description="Slightly reduced interaction with BV16; when associated with T-29." evidence="3">
    <original>K</original>
    <variation>N</variation>
    <location>
        <position position="33"/>
    </location>
</feature>
<feature type="mutagenesis site" description="Strongly reduced interaction with BV16, hypoallergenic." evidence="3">
    <original>E</original>
    <variation>S</variation>
    <location>
        <position position="46"/>
    </location>
</feature>
<feature type="mutagenesis site" description="Slightly reduced interaction with BV16." evidence="3">
    <original>N</original>
    <variation>S</variation>
    <location>
        <position position="48"/>
    </location>
</feature>
<feature type="mutagenesis site" description="Slightly reduced interaction with BV16." evidence="3">
    <original>E</original>
    <variation>S</variation>
    <location>
        <position position="61"/>
    </location>
</feature>
<feature type="mutagenesis site" description="Slightly reduced interaction with BV16." evidence="3">
    <original>P</original>
    <variation>G</variation>
    <location>
        <position position="109"/>
    </location>
</feature>
<feature type="strand" evidence="9">
    <location>
        <begin position="3"/>
        <end position="14"/>
    </location>
</feature>
<feature type="helix" evidence="9">
    <location>
        <begin position="16"/>
        <end position="23"/>
    </location>
</feature>
<feature type="turn" evidence="9">
    <location>
        <begin position="24"/>
        <end position="26"/>
    </location>
</feature>
<feature type="helix" evidence="9">
    <location>
        <begin position="27"/>
        <end position="34"/>
    </location>
</feature>
<feature type="turn" evidence="9">
    <location>
        <begin position="36"/>
        <end position="38"/>
    </location>
</feature>
<feature type="strand" evidence="9">
    <location>
        <begin position="40"/>
        <end position="46"/>
    </location>
</feature>
<feature type="strand" evidence="9">
    <location>
        <begin position="48"/>
        <end position="50"/>
    </location>
</feature>
<feature type="strand" evidence="9">
    <location>
        <begin position="54"/>
        <end position="58"/>
    </location>
</feature>
<feature type="strand" evidence="8">
    <location>
        <begin position="61"/>
        <end position="64"/>
    </location>
</feature>
<feature type="strand" evidence="9">
    <location>
        <begin position="66"/>
        <end position="76"/>
    </location>
</feature>
<feature type="turn" evidence="9">
    <location>
        <begin position="77"/>
        <end position="80"/>
    </location>
</feature>
<feature type="strand" evidence="9">
    <location>
        <begin position="81"/>
        <end position="89"/>
    </location>
</feature>
<feature type="strand" evidence="10">
    <location>
        <begin position="93"/>
        <end position="95"/>
    </location>
</feature>
<feature type="strand" evidence="9">
    <location>
        <begin position="96"/>
        <end position="107"/>
    </location>
</feature>
<feature type="turn" evidence="7">
    <location>
        <begin position="109"/>
        <end position="111"/>
    </location>
</feature>
<feature type="strand" evidence="9">
    <location>
        <begin position="113"/>
        <end position="126"/>
    </location>
</feature>
<feature type="helix" evidence="9">
    <location>
        <begin position="131"/>
        <end position="154"/>
    </location>
</feature>
<feature type="turn" evidence="9">
    <location>
        <begin position="156"/>
        <end position="159"/>
    </location>
</feature>
<proteinExistence type="evidence at protein level"/>
<accession>P15494</accession>
<accession>Q96369</accession>
<name>BEV1A_BETPN</name>
<keyword id="KW-0002">3D-structure</keyword>
<keyword id="KW-0020">Allergen</keyword>
<keyword id="KW-0963">Cytoplasm</keyword>
<keyword id="KW-0903">Direct protein sequencing</keyword>
<keyword id="KW-0568">Pathogenesis-related protein</keyword>
<keyword id="KW-0611">Plant defense</keyword>
<dbReference type="EMBL" id="X15877">
    <property type="protein sequence ID" value="CAA33887.1"/>
    <property type="molecule type" value="mRNA"/>
</dbReference>
<dbReference type="EMBL" id="Z80098">
    <property type="protein sequence ID" value="CAB02153.1"/>
    <property type="molecule type" value="mRNA"/>
</dbReference>
<dbReference type="EMBL" id="Z80099">
    <property type="protein sequence ID" value="CAB02154.1"/>
    <property type="molecule type" value="mRNA"/>
</dbReference>
<dbReference type="EMBL" id="Z80104">
    <property type="protein sequence ID" value="CAB02159.1"/>
    <property type="molecule type" value="mRNA"/>
</dbReference>
<dbReference type="PIR" id="S05376">
    <property type="entry name" value="S05376"/>
</dbReference>
<dbReference type="PDB" id="1B6F">
    <property type="method" value="NMR"/>
    <property type="chains" value="A=2-160"/>
</dbReference>
<dbReference type="PDB" id="1BTV">
    <property type="method" value="NMR"/>
    <property type="chains" value="A=2-160"/>
</dbReference>
<dbReference type="PDB" id="1BV1">
    <property type="method" value="X-ray"/>
    <property type="resolution" value="2.00 A"/>
    <property type="chains" value="A=2-160"/>
</dbReference>
<dbReference type="PDB" id="1FSK">
    <property type="method" value="X-ray"/>
    <property type="resolution" value="2.90 A"/>
    <property type="chains" value="A/D/G/J=2-160"/>
</dbReference>
<dbReference type="PDB" id="1LLT">
    <property type="method" value="X-ray"/>
    <property type="resolution" value="3.10 A"/>
    <property type="chains" value="A=2-160"/>
</dbReference>
<dbReference type="PDB" id="1QMR">
    <property type="method" value="X-ray"/>
    <property type="resolution" value="2.15 A"/>
    <property type="chains" value="A=2-160"/>
</dbReference>
<dbReference type="PDB" id="4A80">
    <property type="method" value="X-ray"/>
    <property type="resolution" value="1.96 A"/>
    <property type="chains" value="A=2-160"/>
</dbReference>
<dbReference type="PDB" id="4A81">
    <property type="method" value="X-ray"/>
    <property type="resolution" value="2.05 A"/>
    <property type="chains" value="A=2-160"/>
</dbReference>
<dbReference type="PDB" id="4A83">
    <property type="method" value="X-ray"/>
    <property type="resolution" value="1.54 A"/>
    <property type="chains" value="A=2-160"/>
</dbReference>
<dbReference type="PDB" id="4A84">
    <property type="method" value="X-ray"/>
    <property type="resolution" value="1.50 A"/>
    <property type="chains" value="A=2-160"/>
</dbReference>
<dbReference type="PDB" id="4A85">
    <property type="method" value="X-ray"/>
    <property type="resolution" value="1.40 A"/>
    <property type="chains" value="A=2-160"/>
</dbReference>
<dbReference type="PDB" id="4A86">
    <property type="method" value="X-ray"/>
    <property type="resolution" value="1.59 A"/>
    <property type="chains" value="A=2-160"/>
</dbReference>
<dbReference type="PDB" id="4A87">
    <property type="method" value="X-ray"/>
    <property type="resolution" value="1.24 A"/>
    <property type="chains" value="A=2-160"/>
</dbReference>
<dbReference type="PDB" id="4A88">
    <property type="method" value="X-ray"/>
    <property type="resolution" value="1.51 A"/>
    <property type="chains" value="A=2-160"/>
</dbReference>
<dbReference type="PDB" id="4A8G">
    <property type="method" value="X-ray"/>
    <property type="resolution" value="2.10 A"/>
    <property type="chains" value="A=2-160"/>
</dbReference>
<dbReference type="PDB" id="4B9R">
    <property type="method" value="X-ray"/>
    <property type="resolution" value="1.76 A"/>
    <property type="chains" value="A=2-160"/>
</dbReference>
<dbReference type="PDB" id="4BK6">
    <property type="method" value="X-ray"/>
    <property type="resolution" value="1.63 A"/>
    <property type="chains" value="A/B=2-160"/>
</dbReference>
<dbReference type="PDB" id="4BK7">
    <property type="method" value="X-ray"/>
    <property type="resolution" value="1.14 A"/>
    <property type="chains" value="A=2-160"/>
</dbReference>
<dbReference type="PDB" id="4BKC">
    <property type="method" value="X-ray"/>
    <property type="resolution" value="1.73 A"/>
    <property type="chains" value="A/B=2-160"/>
</dbReference>
<dbReference type="PDB" id="4BKD">
    <property type="method" value="X-ray"/>
    <property type="resolution" value="1.17 A"/>
    <property type="chains" value="A=2-160"/>
</dbReference>
<dbReference type="PDB" id="4BTZ">
    <property type="method" value="X-ray"/>
    <property type="resolution" value="1.47 A"/>
    <property type="chains" value="A=2-160"/>
</dbReference>
<dbReference type="PDB" id="4MNS">
    <property type="method" value="X-ray"/>
    <property type="resolution" value="1.20 A"/>
    <property type="chains" value="A=2-160"/>
</dbReference>
<dbReference type="PDB" id="4QIP">
    <property type="method" value="X-ray"/>
    <property type="resolution" value="2.00 A"/>
    <property type="chains" value="A=2-160"/>
</dbReference>
<dbReference type="PDB" id="4Z3L">
    <property type="method" value="X-ray"/>
    <property type="resolution" value="2.50 A"/>
    <property type="chains" value="A/B/C/D/E/F=2-160"/>
</dbReference>
<dbReference type="PDB" id="6R3C">
    <property type="method" value="NMR"/>
    <property type="chains" value="A=2-160"/>
</dbReference>
<dbReference type="PDB" id="7MXL">
    <property type="method" value="EM"/>
    <property type="resolution" value="3.20 A"/>
    <property type="chains" value="C=1-160"/>
</dbReference>
<dbReference type="PDB" id="7N0U">
    <property type="method" value="X-ray"/>
    <property type="resolution" value="3.00 A"/>
    <property type="chains" value="C=2-160"/>
</dbReference>
<dbReference type="PDB" id="7N0V">
    <property type="method" value="X-ray"/>
    <property type="resolution" value="3.71 A"/>
    <property type="chains" value="C=2-160"/>
</dbReference>
<dbReference type="PDBsum" id="1B6F"/>
<dbReference type="PDBsum" id="1BTV"/>
<dbReference type="PDBsum" id="1BV1"/>
<dbReference type="PDBsum" id="1FSK"/>
<dbReference type="PDBsum" id="1LLT"/>
<dbReference type="PDBsum" id="1QMR"/>
<dbReference type="PDBsum" id="4A80"/>
<dbReference type="PDBsum" id="4A81"/>
<dbReference type="PDBsum" id="4A83"/>
<dbReference type="PDBsum" id="4A84"/>
<dbReference type="PDBsum" id="4A85"/>
<dbReference type="PDBsum" id="4A86"/>
<dbReference type="PDBsum" id="4A87"/>
<dbReference type="PDBsum" id="4A88"/>
<dbReference type="PDBsum" id="4A8G"/>
<dbReference type="PDBsum" id="4B9R"/>
<dbReference type="PDBsum" id="4BK6"/>
<dbReference type="PDBsum" id="4BK7"/>
<dbReference type="PDBsum" id="4BKC"/>
<dbReference type="PDBsum" id="4BKD"/>
<dbReference type="PDBsum" id="4BTZ"/>
<dbReference type="PDBsum" id="4MNS"/>
<dbReference type="PDBsum" id="4QIP"/>
<dbReference type="PDBsum" id="4Z3L"/>
<dbReference type="PDBsum" id="6R3C"/>
<dbReference type="PDBsum" id="7MXL"/>
<dbReference type="PDBsum" id="7N0U"/>
<dbReference type="PDBsum" id="7N0V"/>
<dbReference type="BMRB" id="P15494"/>
<dbReference type="EMDB" id="EMD-24073"/>
<dbReference type="SMR" id="P15494"/>
<dbReference type="BindingDB" id="P15494"/>
<dbReference type="ChEMBL" id="CHEMBL3879834"/>
<dbReference type="Allergome" id="123">
    <property type="allergen name" value="Bet v 1.0112"/>
</dbReference>
<dbReference type="Allergome" id="89">
    <property type="allergen name" value="Bet v 1"/>
</dbReference>
<dbReference type="Allergome" id="90">
    <property type="allergen name" value="Bet v 1.0101"/>
</dbReference>
<dbReference type="ABCD" id="P15494">
    <property type="antibodies" value="15 sequenced antibodies"/>
</dbReference>
<dbReference type="EvolutionaryTrace" id="P15494"/>
<dbReference type="GO" id="GO:0005737">
    <property type="term" value="C:cytoplasm"/>
    <property type="evidence" value="ECO:0007669"/>
    <property type="project" value="UniProtKB-SubCell"/>
</dbReference>
<dbReference type="GO" id="GO:0005634">
    <property type="term" value="C:nucleus"/>
    <property type="evidence" value="ECO:0007669"/>
    <property type="project" value="TreeGrafter"/>
</dbReference>
<dbReference type="GO" id="GO:0010427">
    <property type="term" value="F:abscisic acid binding"/>
    <property type="evidence" value="ECO:0007669"/>
    <property type="project" value="InterPro"/>
</dbReference>
<dbReference type="GO" id="GO:0004864">
    <property type="term" value="F:protein phosphatase inhibitor activity"/>
    <property type="evidence" value="ECO:0007669"/>
    <property type="project" value="InterPro"/>
</dbReference>
<dbReference type="GO" id="GO:0038023">
    <property type="term" value="F:signaling receptor activity"/>
    <property type="evidence" value="ECO:0007669"/>
    <property type="project" value="InterPro"/>
</dbReference>
<dbReference type="GO" id="GO:0009738">
    <property type="term" value="P:abscisic acid-activated signaling pathway"/>
    <property type="evidence" value="ECO:0007669"/>
    <property type="project" value="InterPro"/>
</dbReference>
<dbReference type="GO" id="GO:0006952">
    <property type="term" value="P:defense response"/>
    <property type="evidence" value="ECO:0007669"/>
    <property type="project" value="UniProtKB-KW"/>
</dbReference>
<dbReference type="CDD" id="cd07816">
    <property type="entry name" value="Bet_v1-like"/>
    <property type="match status" value="1"/>
</dbReference>
<dbReference type="FunFam" id="3.30.530.20:FF:000007">
    <property type="entry name" value="Major pollen allergen Bet v 1-A"/>
    <property type="match status" value="1"/>
</dbReference>
<dbReference type="Gene3D" id="3.30.530.20">
    <property type="match status" value="1"/>
</dbReference>
<dbReference type="InterPro" id="IPR000916">
    <property type="entry name" value="Bet_v_I/MLP"/>
</dbReference>
<dbReference type="InterPro" id="IPR024949">
    <property type="entry name" value="Bet_v_I_allergen"/>
</dbReference>
<dbReference type="InterPro" id="IPR050279">
    <property type="entry name" value="Plant_def-hormone_signal"/>
</dbReference>
<dbReference type="InterPro" id="IPR023393">
    <property type="entry name" value="START-like_dom_sf"/>
</dbReference>
<dbReference type="PANTHER" id="PTHR31213">
    <property type="entry name" value="OS08G0374000 PROTEIN-RELATED"/>
    <property type="match status" value="1"/>
</dbReference>
<dbReference type="PANTHER" id="PTHR31213:SF55">
    <property type="entry name" value="STRESS-INDUCED PROTEIN SAM22"/>
    <property type="match status" value="1"/>
</dbReference>
<dbReference type="Pfam" id="PF00407">
    <property type="entry name" value="Bet_v_1"/>
    <property type="match status" value="1"/>
</dbReference>
<dbReference type="PRINTS" id="PR00634">
    <property type="entry name" value="BETALLERGEN"/>
</dbReference>
<dbReference type="SMART" id="SM01037">
    <property type="entry name" value="Bet_v_1"/>
    <property type="match status" value="1"/>
</dbReference>
<dbReference type="SUPFAM" id="SSF55961">
    <property type="entry name" value="Bet v1-like"/>
    <property type="match status" value="1"/>
</dbReference>
<dbReference type="PROSITE" id="PS00451">
    <property type="entry name" value="PATHOGENESIS_BETVI"/>
    <property type="match status" value="1"/>
</dbReference>
<protein>
    <recommendedName>
        <fullName>Major pollen allergen Bet v 1-A</fullName>
    </recommendedName>
    <alternativeName>
        <fullName>Allergen Bet v I-A</fullName>
    </alternativeName>
    <allergenName>Bet v 1-A</allergenName>
</protein>
<gene>
    <name type="primary">BETVIA</name>
    <name type="synonym">BETVI</name>
</gene>
<comment type="function">
    <text evidence="1">May be a general steroid carrier protein.</text>
</comment>
<comment type="subcellular location">
    <subcellularLocation>
        <location>Cytoplasm</location>
    </subcellularLocation>
</comment>
<comment type="allergen">
    <text>Causes an allergic reaction in human. Is a cause of type I allergic reactions in Europe, North America and USSR.</text>
</comment>
<comment type="similarity">
    <text evidence="6">Belongs to the BetVI family.</text>
</comment>
<evidence type="ECO:0000250" key="1"/>
<evidence type="ECO:0000250" key="2">
    <source>
        <dbReference type="UniProtKB" id="P43185"/>
    </source>
</evidence>
<evidence type="ECO:0000269" key="3">
    <source>
    </source>
</evidence>
<evidence type="ECO:0000269" key="4">
    <source>
    </source>
</evidence>
<evidence type="ECO:0000269" key="5">
    <source>
    </source>
</evidence>
<evidence type="ECO:0000305" key="6"/>
<evidence type="ECO:0007829" key="7">
    <source>
        <dbReference type="PDB" id="1B6F"/>
    </source>
</evidence>
<evidence type="ECO:0007829" key="8">
    <source>
        <dbReference type="PDB" id="1LLT"/>
    </source>
</evidence>
<evidence type="ECO:0007829" key="9">
    <source>
        <dbReference type="PDB" id="4BK7"/>
    </source>
</evidence>
<evidence type="ECO:0007829" key="10">
    <source>
        <dbReference type="PDB" id="4QIP"/>
    </source>
</evidence>
<sequence>MGVFNYETETTSVIPAARLFKAFILDGDNLFPKVAPQAISSVENIEGNGGPGTIKKISFPEGFPFKYVKDRVDEVDHTNFKYNYSVIEGGPIGDTLEKISNEIKIVATPDGGSILKISNKYHTKGDHEVKAEQVKASKEMGETLLRAVESYLLAHSDAYN</sequence>
<organism>
    <name type="scientific">Betula pendula</name>
    <name type="common">European white birch</name>
    <name type="synonym">Betula verrucosa</name>
    <dbReference type="NCBI Taxonomy" id="3505"/>
    <lineage>
        <taxon>Eukaryota</taxon>
        <taxon>Viridiplantae</taxon>
        <taxon>Streptophyta</taxon>
        <taxon>Embryophyta</taxon>
        <taxon>Tracheophyta</taxon>
        <taxon>Spermatophyta</taxon>
        <taxon>Magnoliopsida</taxon>
        <taxon>eudicotyledons</taxon>
        <taxon>Gunneridae</taxon>
        <taxon>Pentapetalae</taxon>
        <taxon>rosids</taxon>
        <taxon>fabids</taxon>
        <taxon>Fagales</taxon>
        <taxon>Betulaceae</taxon>
        <taxon>Betula</taxon>
    </lineage>
</organism>